<protein>
    <recommendedName>
        <fullName>Cytochrome b</fullName>
    </recommendedName>
    <alternativeName>
        <fullName>Complex III subunit 3</fullName>
    </alternativeName>
    <alternativeName>
        <fullName>Complex III subunit III</fullName>
    </alternativeName>
    <alternativeName>
        <fullName>Cytochrome b-c1 complex subunit 3</fullName>
    </alternativeName>
    <alternativeName>
        <fullName>Ubiquinol-cytochrome-c reductase complex cytochrome b subunit</fullName>
    </alternativeName>
</protein>
<geneLocation type="mitochondrion"/>
<feature type="chain" id="PRO_0000060602" description="Cytochrome b">
    <location>
        <begin position="1"/>
        <end position="380"/>
    </location>
</feature>
<feature type="transmembrane region" description="Helical" evidence="2">
    <location>
        <begin position="34"/>
        <end position="54"/>
    </location>
</feature>
<feature type="transmembrane region" description="Helical" evidence="2">
    <location>
        <begin position="78"/>
        <end position="99"/>
    </location>
</feature>
<feature type="transmembrane region" description="Helical" evidence="2">
    <location>
        <begin position="114"/>
        <end position="134"/>
    </location>
</feature>
<feature type="transmembrane region" description="Helical" evidence="2">
    <location>
        <begin position="179"/>
        <end position="199"/>
    </location>
</feature>
<feature type="transmembrane region" description="Helical" evidence="2">
    <location>
        <begin position="227"/>
        <end position="247"/>
    </location>
</feature>
<feature type="transmembrane region" description="Helical" evidence="2">
    <location>
        <begin position="289"/>
        <end position="309"/>
    </location>
</feature>
<feature type="transmembrane region" description="Helical" evidence="2">
    <location>
        <begin position="321"/>
        <end position="341"/>
    </location>
</feature>
<feature type="transmembrane region" description="Helical" evidence="2">
    <location>
        <begin position="348"/>
        <end position="368"/>
    </location>
</feature>
<feature type="binding site" description="axial binding residue" evidence="2">
    <location>
        <position position="84"/>
    </location>
    <ligand>
        <name>heme b</name>
        <dbReference type="ChEBI" id="CHEBI:60344"/>
        <label>b562</label>
    </ligand>
    <ligandPart>
        <name>Fe</name>
        <dbReference type="ChEBI" id="CHEBI:18248"/>
    </ligandPart>
</feature>
<feature type="binding site" description="axial binding residue" evidence="2">
    <location>
        <position position="98"/>
    </location>
    <ligand>
        <name>heme b</name>
        <dbReference type="ChEBI" id="CHEBI:60344"/>
        <label>b566</label>
    </ligand>
    <ligandPart>
        <name>Fe</name>
        <dbReference type="ChEBI" id="CHEBI:18248"/>
    </ligandPart>
</feature>
<feature type="binding site" description="axial binding residue" evidence="2">
    <location>
        <position position="183"/>
    </location>
    <ligand>
        <name>heme b</name>
        <dbReference type="ChEBI" id="CHEBI:60344"/>
        <label>b562</label>
    </ligand>
    <ligandPart>
        <name>Fe</name>
        <dbReference type="ChEBI" id="CHEBI:18248"/>
    </ligandPart>
</feature>
<feature type="binding site" description="axial binding residue" evidence="2">
    <location>
        <position position="197"/>
    </location>
    <ligand>
        <name>heme b</name>
        <dbReference type="ChEBI" id="CHEBI:60344"/>
        <label>b566</label>
    </ligand>
    <ligandPart>
        <name>Fe</name>
        <dbReference type="ChEBI" id="CHEBI:18248"/>
    </ligandPart>
</feature>
<feature type="binding site" evidence="2">
    <location>
        <position position="202"/>
    </location>
    <ligand>
        <name>a ubiquinone</name>
        <dbReference type="ChEBI" id="CHEBI:16389"/>
    </ligand>
</feature>
<reference key="1">
    <citation type="journal article" date="1994" name="Auk">
        <title>Phylogeny of cranes (Gruiformes: Gruidae) based on cytochrome-b DNA sequences.</title>
        <authorList>
            <person name="Krajewski C.W."/>
            <person name="Fetzner J.W."/>
        </authorList>
    </citation>
    <scope>NUCLEOTIDE SEQUENCE [GENOMIC DNA]</scope>
</reference>
<gene>
    <name type="primary">MT-CYB</name>
    <name type="synonym">COB</name>
    <name type="synonym">CYTB</name>
    <name type="synonym">MTCYB</name>
</gene>
<sequence>MAPNLRKSHPLLKMVNNSLIDLPTPSNISAWWNFGSLLGICLATQILTGLLLAAHYTADTTLAFSSVAHTCRNVQHGWLIRNLHANGASFFFICIYLHIGRGLYYGSYLYKETWNTGVILLLTLMATAFVGYVLPWGQMSFWGATVITNLFSAVPYIGQTLVEWAWGGFSVDNPTLTRFFTLHFLLPFMIMGLTLIHLTFLHESGSNNPLGIVSNCDKIPFHPYFSLKDILGFMLMLLPLMTLALFSPNLLGDPENFPPANPLVTPPYIKPEWYFLFAYAILRSIPNKLGGVLALAASVLILFLAPLLHKSKQRTMTFRPLSQLLFWTLTANLLILTWVGSQPVEHPFMIIGQLASLTYFTILLVLFPITGALENKMLNY</sequence>
<proteinExistence type="inferred from homology"/>
<accession>Q33941</accession>
<evidence type="ECO:0000250" key="1"/>
<evidence type="ECO:0000250" key="2">
    <source>
        <dbReference type="UniProtKB" id="P00157"/>
    </source>
</evidence>
<evidence type="ECO:0000255" key="3">
    <source>
        <dbReference type="PROSITE-ProRule" id="PRU00967"/>
    </source>
</evidence>
<evidence type="ECO:0000255" key="4">
    <source>
        <dbReference type="PROSITE-ProRule" id="PRU00968"/>
    </source>
</evidence>
<comment type="function">
    <text evidence="2">Component of the ubiquinol-cytochrome c reductase complex (complex III or cytochrome b-c1 complex) that is part of the mitochondrial respiratory chain. The b-c1 complex mediates electron transfer from ubiquinol to cytochrome c. Contributes to the generation of a proton gradient across the mitochondrial membrane that is then used for ATP synthesis.</text>
</comment>
<comment type="cofactor">
    <cofactor evidence="2">
        <name>heme b</name>
        <dbReference type="ChEBI" id="CHEBI:60344"/>
    </cofactor>
    <text evidence="2">Binds 2 heme b groups non-covalently.</text>
</comment>
<comment type="subunit">
    <text evidence="2">The cytochrome bc1 complex contains 11 subunits: 3 respiratory subunits (MT-CYB, CYC1 and UQCRFS1), 2 core proteins (UQCRC1 and UQCRC2) and 6 low-molecular weight proteins (UQCRH/QCR6, UQCRB/QCR7, UQCRQ/QCR8, UQCR10/QCR9, UQCR11/QCR10 and a cleavage product of UQCRFS1). This cytochrome bc1 complex then forms a dimer.</text>
</comment>
<comment type="subcellular location">
    <subcellularLocation>
        <location evidence="2">Mitochondrion inner membrane</location>
        <topology evidence="2">Multi-pass membrane protein</topology>
    </subcellularLocation>
</comment>
<comment type="miscellaneous">
    <text evidence="1">Heme 1 (or BL or b562) is low-potential and absorbs at about 562 nm, and heme 2 (or BH or b566) is high-potential and absorbs at about 566 nm.</text>
</comment>
<comment type="similarity">
    <text evidence="3 4">Belongs to the cytochrome b family.</text>
</comment>
<comment type="caution">
    <text evidence="2">The full-length protein contains only eight transmembrane helices, not nine as predicted by bioinformatics tools.</text>
</comment>
<keyword id="KW-0249">Electron transport</keyword>
<keyword id="KW-0349">Heme</keyword>
<keyword id="KW-0408">Iron</keyword>
<keyword id="KW-0472">Membrane</keyword>
<keyword id="KW-0479">Metal-binding</keyword>
<keyword id="KW-0496">Mitochondrion</keyword>
<keyword id="KW-0999">Mitochondrion inner membrane</keyword>
<keyword id="KW-0679">Respiratory chain</keyword>
<keyword id="KW-0812">Transmembrane</keyword>
<keyword id="KW-1133">Transmembrane helix</keyword>
<keyword id="KW-0813">Transport</keyword>
<keyword id="KW-0830">Ubiquinone</keyword>
<name>CYB_ANTVI</name>
<dbReference type="EMBL" id="U27545">
    <property type="protein sequence ID" value="AAA69782.1"/>
    <property type="molecule type" value="Genomic_DNA"/>
</dbReference>
<dbReference type="RefSeq" id="YP_007624343.1">
    <property type="nucleotide sequence ID" value="NC_020573.1"/>
</dbReference>
<dbReference type="SMR" id="Q33941"/>
<dbReference type="GeneID" id="15088385"/>
<dbReference type="CTD" id="4519"/>
<dbReference type="GO" id="GO:0005743">
    <property type="term" value="C:mitochondrial inner membrane"/>
    <property type="evidence" value="ECO:0007669"/>
    <property type="project" value="UniProtKB-SubCell"/>
</dbReference>
<dbReference type="GO" id="GO:0045275">
    <property type="term" value="C:respiratory chain complex III"/>
    <property type="evidence" value="ECO:0007669"/>
    <property type="project" value="InterPro"/>
</dbReference>
<dbReference type="GO" id="GO:0046872">
    <property type="term" value="F:metal ion binding"/>
    <property type="evidence" value="ECO:0007669"/>
    <property type="project" value="UniProtKB-KW"/>
</dbReference>
<dbReference type="GO" id="GO:0008121">
    <property type="term" value="F:ubiquinol-cytochrome-c reductase activity"/>
    <property type="evidence" value="ECO:0007669"/>
    <property type="project" value="InterPro"/>
</dbReference>
<dbReference type="GO" id="GO:0006122">
    <property type="term" value="P:mitochondrial electron transport, ubiquinol to cytochrome c"/>
    <property type="evidence" value="ECO:0007669"/>
    <property type="project" value="TreeGrafter"/>
</dbReference>
<dbReference type="CDD" id="cd00290">
    <property type="entry name" value="cytochrome_b_C"/>
    <property type="match status" value="1"/>
</dbReference>
<dbReference type="CDD" id="cd00284">
    <property type="entry name" value="Cytochrome_b_N"/>
    <property type="match status" value="1"/>
</dbReference>
<dbReference type="FunFam" id="1.20.810.10:FF:000002">
    <property type="entry name" value="Cytochrome b"/>
    <property type="match status" value="1"/>
</dbReference>
<dbReference type="Gene3D" id="1.20.810.10">
    <property type="entry name" value="Cytochrome Bc1 Complex, Chain C"/>
    <property type="match status" value="1"/>
</dbReference>
<dbReference type="InterPro" id="IPR005798">
    <property type="entry name" value="Cyt_b/b6_C"/>
</dbReference>
<dbReference type="InterPro" id="IPR036150">
    <property type="entry name" value="Cyt_b/b6_C_sf"/>
</dbReference>
<dbReference type="InterPro" id="IPR005797">
    <property type="entry name" value="Cyt_b/b6_N"/>
</dbReference>
<dbReference type="InterPro" id="IPR027387">
    <property type="entry name" value="Cytb/b6-like_sf"/>
</dbReference>
<dbReference type="InterPro" id="IPR030689">
    <property type="entry name" value="Cytochrome_b"/>
</dbReference>
<dbReference type="InterPro" id="IPR048260">
    <property type="entry name" value="Cytochrome_b_C_euk/bac"/>
</dbReference>
<dbReference type="InterPro" id="IPR048259">
    <property type="entry name" value="Cytochrome_b_N_euk/bac"/>
</dbReference>
<dbReference type="InterPro" id="IPR016174">
    <property type="entry name" value="Di-haem_cyt_TM"/>
</dbReference>
<dbReference type="PANTHER" id="PTHR19271">
    <property type="entry name" value="CYTOCHROME B"/>
    <property type="match status" value="1"/>
</dbReference>
<dbReference type="PANTHER" id="PTHR19271:SF16">
    <property type="entry name" value="CYTOCHROME B"/>
    <property type="match status" value="1"/>
</dbReference>
<dbReference type="Pfam" id="PF00032">
    <property type="entry name" value="Cytochrom_B_C"/>
    <property type="match status" value="1"/>
</dbReference>
<dbReference type="Pfam" id="PF00033">
    <property type="entry name" value="Cytochrome_B"/>
    <property type="match status" value="1"/>
</dbReference>
<dbReference type="PIRSF" id="PIRSF038885">
    <property type="entry name" value="COB"/>
    <property type="match status" value="1"/>
</dbReference>
<dbReference type="SUPFAM" id="SSF81648">
    <property type="entry name" value="a domain/subunit of cytochrome bc1 complex (Ubiquinol-cytochrome c reductase)"/>
    <property type="match status" value="1"/>
</dbReference>
<dbReference type="SUPFAM" id="SSF81342">
    <property type="entry name" value="Transmembrane di-heme cytochromes"/>
    <property type="match status" value="1"/>
</dbReference>
<dbReference type="PROSITE" id="PS51003">
    <property type="entry name" value="CYTB_CTER"/>
    <property type="match status" value="1"/>
</dbReference>
<dbReference type="PROSITE" id="PS51002">
    <property type="entry name" value="CYTB_NTER"/>
    <property type="match status" value="1"/>
</dbReference>
<organism>
    <name type="scientific">Anthropoides virgo</name>
    <name type="common">Demoiselle crane</name>
    <name type="synonym">Grus virgo</name>
    <dbReference type="NCBI Taxonomy" id="9111"/>
    <lineage>
        <taxon>Eukaryota</taxon>
        <taxon>Metazoa</taxon>
        <taxon>Chordata</taxon>
        <taxon>Craniata</taxon>
        <taxon>Vertebrata</taxon>
        <taxon>Euteleostomi</taxon>
        <taxon>Archelosauria</taxon>
        <taxon>Archosauria</taxon>
        <taxon>Dinosauria</taxon>
        <taxon>Saurischia</taxon>
        <taxon>Theropoda</taxon>
        <taxon>Coelurosauria</taxon>
        <taxon>Aves</taxon>
        <taxon>Neognathae</taxon>
        <taxon>Neoaves</taxon>
        <taxon>Gruiformes</taxon>
        <taxon>Gruidae</taxon>
        <taxon>Anthropoides</taxon>
    </lineage>
</organism>